<accession>Q99733</accession>
<accession>B2R6J4</accession>
<accession>F5HFY4</accession>
<gene>
    <name evidence="12" type="primary">NAP1L4</name>
    <name evidence="9" type="synonym">NAP2</name>
</gene>
<proteinExistence type="evidence at protein level"/>
<comment type="function">
    <text evidence="8">Acts as a histone chaperone in nucleosome assembly.</text>
</comment>
<comment type="subunit">
    <text evidence="8">Interacts with core (H2A, CD2APH2B, H3, H4) and linker (H1) histones.</text>
</comment>
<comment type="subunit">
    <text evidence="6">(Microbial infection) Interacts with Chikungunya virus non-structural protein 3 (via C-terminus).</text>
</comment>
<comment type="interaction">
    <interactant intactId="EBI-2255116">
        <id>Q99733</id>
    </interactant>
    <interactant intactId="EBI-356392">
        <id>P55209</id>
        <label>NAP1L1</label>
    </interactant>
    <organismsDiffer>false</organismsDiffer>
    <experiments>4</experiments>
</comment>
<comment type="interaction">
    <interactant intactId="EBI-2255116">
        <id>Q99733</id>
    </interactant>
    <interactant intactId="EBI-6164389">
        <id>P04608</id>
        <label>tat</label>
    </interactant>
    <organismsDiffer>true</organismsDiffer>
    <experiments>3</experiments>
</comment>
<comment type="subcellular location">
    <subcellularLocation>
        <location evidence="5 8">Nucleus</location>
    </subcellularLocation>
    <subcellularLocation>
        <location evidence="5 8">Cytoplasm</location>
    </subcellularLocation>
    <text evidence="5 8">Present in the cytoplasm and excluded from the nucleus during G0/G1 phase, then relocates to the nucleus by the time cells are in S phase (PubMed:9325046). Phosphorylated form localizes in the cytoplasm during the G0/G1 transition, whereas dephosphorylation leads to relocalization into the nucleus at the G1/S-boundary (PubMed:10764593).</text>
</comment>
<comment type="alternative products">
    <event type="alternative splicing"/>
    <isoform>
        <id>Q99733-1</id>
        <name>1</name>
        <sequence type="displayed"/>
    </isoform>
    <isoform>
        <id>Q99733-2</id>
        <name>2</name>
        <name evidence="10">NAP1L4b</name>
        <sequence type="described" ref="VSP_053910"/>
    </isoform>
</comment>
<comment type="tissue specificity">
    <text evidence="7">Ubiquitous. Biallelically expressed in fetal and adult tissues. Highest levels in testis.</text>
</comment>
<comment type="PTM">
    <text evidence="5">Phosphorylated at the G0/G1 boundary but it is not phosphorylated in S-phase. Phosphorylated protein remains in the cytoplasm in a complex with histones during the G0/G1 transition, whereas dephosphorylation triggers its transport into the nucleus at the G1/S-boundary.</text>
</comment>
<comment type="PTM">
    <text evidence="2 11">Polyglutamylated by TTLL4, a modification that occurs exclusively on glutamate residues and results in polyglutamate chains on the gamma-carboxyl group. Some residues may also be monoglycylated but not polyglycylated due to the absence of functional TTLL10 in human (By similarity).</text>
</comment>
<comment type="similarity">
    <text evidence="11">Belongs to the nucleosome assembly protein (NAP) family.</text>
</comment>
<keyword id="KW-0007">Acetylation</keyword>
<keyword id="KW-0025">Alternative splicing</keyword>
<keyword id="KW-0143">Chaperone</keyword>
<keyword id="KW-0963">Cytoplasm</keyword>
<keyword id="KW-0539">Nucleus</keyword>
<keyword id="KW-0597">Phosphoprotein</keyword>
<keyword id="KW-1267">Proteomics identification</keyword>
<keyword id="KW-1185">Reference proteome</keyword>
<sequence>MADHSFSDGVPSDSVEAAKNASNTEKLTDQVMQNPRVLAALQERLDNVPHTPSSYIETLPKAVKRRINALKQLQVRCAHIEAKFYEEVHDLERKYAALYQPLFDKRREFITGDVEPTDAESEWHSENEEEEKLAGDMKSKVVVTEKAAATAEEPDPKGIPEFWFTIFRNVDMLSELVQEYDEPILKHLQDIKVKFSDPGQPMSFVLEFHFEPNDYFTNSVLTKTYKMKSEPDKADPFSFEGPEIVDCDGCTIDWKKGKNVTVKTIKKKQKHKGRGTVRTITKQVPNESFFNFFNPLKASGDGESLDEDSEFTLASDFEIGHFFRERIVPRAVLYFTGEAIEDDDNFEEGEEGEEEELEGDEEGEDEDDAEINPKV</sequence>
<dbReference type="EMBL" id="U77456">
    <property type="protein sequence ID" value="AAC50870.1"/>
    <property type="molecule type" value="mRNA"/>
</dbReference>
<dbReference type="EMBL" id="AB500094">
    <property type="protein sequence ID" value="BAH95827.1"/>
    <property type="molecule type" value="mRNA"/>
</dbReference>
<dbReference type="EMBL" id="AK312599">
    <property type="protein sequence ID" value="BAG35491.1"/>
    <property type="molecule type" value="mRNA"/>
</dbReference>
<dbReference type="EMBL" id="AC131971">
    <property type="status" value="NOT_ANNOTATED_CDS"/>
    <property type="molecule type" value="Genomic_DNA"/>
</dbReference>
<dbReference type="EMBL" id="BC022090">
    <property type="protein sequence ID" value="AAH22090.1"/>
    <property type="molecule type" value="mRNA"/>
</dbReference>
<dbReference type="CCDS" id="CCDS41599.1">
    <molecule id="Q99733-1"/>
</dbReference>
<dbReference type="CCDS" id="CCDS91410.1">
    <molecule id="Q99733-2"/>
</dbReference>
<dbReference type="RefSeq" id="NP_001356304.1">
    <molecule id="Q99733-1"/>
    <property type="nucleotide sequence ID" value="NM_001369375.1"/>
</dbReference>
<dbReference type="RefSeq" id="NP_001356305.1">
    <molecule id="Q99733-1"/>
    <property type="nucleotide sequence ID" value="NM_001369376.1"/>
</dbReference>
<dbReference type="RefSeq" id="NP_001356306.1">
    <molecule id="Q99733-1"/>
    <property type="nucleotide sequence ID" value="NM_001369377.1"/>
</dbReference>
<dbReference type="RefSeq" id="NP_001356307.1">
    <molecule id="Q99733-1"/>
    <property type="nucleotide sequence ID" value="NM_001369378.1"/>
</dbReference>
<dbReference type="RefSeq" id="NP_001356308.1">
    <molecule id="Q99733-1"/>
    <property type="nucleotide sequence ID" value="NM_001369379.1"/>
</dbReference>
<dbReference type="RefSeq" id="NP_001356309.1">
    <molecule id="Q99733-2"/>
    <property type="nucleotide sequence ID" value="NM_001369380.1"/>
</dbReference>
<dbReference type="RefSeq" id="NP_001356310.1">
    <molecule id="Q99733-2"/>
    <property type="nucleotide sequence ID" value="NM_001369381.1"/>
</dbReference>
<dbReference type="RefSeq" id="NP_001356311.1">
    <molecule id="Q99733-2"/>
    <property type="nucleotide sequence ID" value="NM_001369382.1"/>
</dbReference>
<dbReference type="RefSeq" id="NP_001356312.1">
    <molecule id="Q99733-2"/>
    <property type="nucleotide sequence ID" value="NM_001369383.1"/>
</dbReference>
<dbReference type="RefSeq" id="NP_001356313.1">
    <molecule id="Q99733-2"/>
    <property type="nucleotide sequence ID" value="NM_001369384.1"/>
</dbReference>
<dbReference type="RefSeq" id="NP_001356314.1">
    <molecule id="Q99733-2"/>
    <property type="nucleotide sequence ID" value="NM_001369385.1"/>
</dbReference>
<dbReference type="RefSeq" id="NP_001356315.1">
    <molecule id="Q99733-2"/>
    <property type="nucleotide sequence ID" value="NM_001369386.1"/>
</dbReference>
<dbReference type="RefSeq" id="NP_001356317.1">
    <molecule id="Q99733-2"/>
    <property type="nucleotide sequence ID" value="NM_001369388.1"/>
</dbReference>
<dbReference type="RefSeq" id="NP_005960.1">
    <molecule id="Q99733-1"/>
    <property type="nucleotide sequence ID" value="NM_005969.4"/>
</dbReference>
<dbReference type="SMR" id="Q99733"/>
<dbReference type="BioGRID" id="110757">
    <property type="interactions" value="227"/>
</dbReference>
<dbReference type="FunCoup" id="Q99733">
    <property type="interactions" value="3211"/>
</dbReference>
<dbReference type="IntAct" id="Q99733">
    <property type="interactions" value="93"/>
</dbReference>
<dbReference type="MINT" id="Q99733"/>
<dbReference type="STRING" id="9606.ENSP00000369915"/>
<dbReference type="ChEMBL" id="CHEMBL3886061"/>
<dbReference type="GlyGen" id="Q99733">
    <property type="glycosylation" value="2 sites, 1 O-linked glycan (1 site)"/>
</dbReference>
<dbReference type="iPTMnet" id="Q99733"/>
<dbReference type="MetOSite" id="Q99733"/>
<dbReference type="PhosphoSitePlus" id="Q99733"/>
<dbReference type="SwissPalm" id="Q99733"/>
<dbReference type="BioMuta" id="NAP1L4"/>
<dbReference type="DMDM" id="2498672"/>
<dbReference type="jPOST" id="Q99733"/>
<dbReference type="MassIVE" id="Q99733"/>
<dbReference type="PaxDb" id="9606-ENSP00000369915"/>
<dbReference type="PeptideAtlas" id="Q99733"/>
<dbReference type="ProteomicsDB" id="27835"/>
<dbReference type="ProteomicsDB" id="78450">
    <molecule id="Q99733-1"/>
</dbReference>
<dbReference type="Pumba" id="Q99733"/>
<dbReference type="Antibodypedia" id="23223">
    <property type="antibodies" value="73 antibodies from 21 providers"/>
</dbReference>
<dbReference type="DNASU" id="4676"/>
<dbReference type="Ensembl" id="ENST00000380542.9">
    <molecule id="Q99733-1"/>
    <property type="protein sequence ID" value="ENSP00000369915.4"/>
    <property type="gene ID" value="ENSG00000205531.14"/>
</dbReference>
<dbReference type="Ensembl" id="ENST00000526115.5">
    <molecule id="Q99733-2"/>
    <property type="protein sequence ID" value="ENSP00000436397.1"/>
    <property type="gene ID" value="ENSG00000205531.14"/>
</dbReference>
<dbReference type="Ensembl" id="ENST00000616696.1">
    <molecule id="Q99733-2"/>
    <property type="protein sequence ID" value="ENSP00000478654.1"/>
    <property type="gene ID" value="ENSG00000273562.4"/>
</dbReference>
<dbReference type="Ensembl" id="ENST00000619695.4">
    <molecule id="Q99733-1"/>
    <property type="protein sequence ID" value="ENSP00000483728.1"/>
    <property type="gene ID" value="ENSG00000273562.4"/>
</dbReference>
<dbReference type="Ensembl" id="ENST00000620138.4">
    <molecule id="Q99733-2"/>
    <property type="protein sequence ID" value="ENSP00000481412.1"/>
    <property type="gene ID" value="ENSG00000205531.14"/>
</dbReference>
<dbReference type="Ensembl" id="ENST00000632791.1">
    <molecule id="Q99733-2"/>
    <property type="protein sequence ID" value="ENSP00000487984.1"/>
    <property type="gene ID" value="ENSG00000273562.4"/>
</dbReference>
<dbReference type="GeneID" id="4676"/>
<dbReference type="KEGG" id="hsa:4676"/>
<dbReference type="MANE-Select" id="ENST00000380542.9">
    <property type="protein sequence ID" value="ENSP00000369915.4"/>
    <property type="RefSeq nucleotide sequence ID" value="NM_005969.4"/>
    <property type="RefSeq protein sequence ID" value="NP_005960.1"/>
</dbReference>
<dbReference type="UCSC" id="uc001lxc.4">
    <molecule id="Q99733-1"/>
    <property type="organism name" value="human"/>
</dbReference>
<dbReference type="AGR" id="HGNC:7640"/>
<dbReference type="CTD" id="4676"/>
<dbReference type="DisGeNET" id="4676"/>
<dbReference type="GeneCards" id="NAP1L4"/>
<dbReference type="HGNC" id="HGNC:7640">
    <property type="gene designation" value="NAP1L4"/>
</dbReference>
<dbReference type="HPA" id="ENSG00000205531">
    <property type="expression patterns" value="Low tissue specificity"/>
</dbReference>
<dbReference type="MIM" id="601651">
    <property type="type" value="gene"/>
</dbReference>
<dbReference type="neXtProt" id="NX_Q99733"/>
<dbReference type="OpenTargets" id="ENSG00000205531"/>
<dbReference type="PharmGKB" id="PA31442"/>
<dbReference type="VEuPathDB" id="HostDB:ENSG00000205531"/>
<dbReference type="eggNOG" id="KOG1507">
    <property type="taxonomic scope" value="Eukaryota"/>
</dbReference>
<dbReference type="GeneTree" id="ENSGT00940000153362"/>
<dbReference type="HOGENOM" id="CLU_038841_3_0_1"/>
<dbReference type="InParanoid" id="Q99733"/>
<dbReference type="OMA" id="YSGDFMY"/>
<dbReference type="OrthoDB" id="27325at2759"/>
<dbReference type="PAN-GO" id="Q99733">
    <property type="GO annotations" value="5 GO annotations based on evolutionary models"/>
</dbReference>
<dbReference type="PhylomeDB" id="Q99733"/>
<dbReference type="TreeFam" id="TF314349"/>
<dbReference type="PathwayCommons" id="Q99733"/>
<dbReference type="SignaLink" id="Q99733"/>
<dbReference type="BioGRID-ORCS" id="4676">
    <property type="hits" value="9 hits in 1160 CRISPR screens"/>
</dbReference>
<dbReference type="CD-CODE" id="FB4E32DD">
    <property type="entry name" value="Presynaptic clusters and postsynaptic densities"/>
</dbReference>
<dbReference type="ChiTaRS" id="NAP1L4">
    <property type="organism name" value="human"/>
</dbReference>
<dbReference type="GeneWiki" id="NAP1L4"/>
<dbReference type="GenomeRNAi" id="4676"/>
<dbReference type="Pharos" id="Q99733">
    <property type="development level" value="Tbio"/>
</dbReference>
<dbReference type="PRO" id="PR:Q99733"/>
<dbReference type="Proteomes" id="UP000005640">
    <property type="component" value="Chromosome 11"/>
</dbReference>
<dbReference type="RNAct" id="Q99733">
    <property type="molecule type" value="protein"/>
</dbReference>
<dbReference type="Bgee" id="ENSG00000205531">
    <property type="expression patterns" value="Expressed in ventricular zone and 100 other cell types or tissues"/>
</dbReference>
<dbReference type="ExpressionAtlas" id="Q99733">
    <property type="expression patterns" value="baseline and differential"/>
</dbReference>
<dbReference type="GO" id="GO:0000785">
    <property type="term" value="C:chromatin"/>
    <property type="evidence" value="ECO:0000318"/>
    <property type="project" value="GO_Central"/>
</dbReference>
<dbReference type="GO" id="GO:0005737">
    <property type="term" value="C:cytoplasm"/>
    <property type="evidence" value="ECO:0000314"/>
    <property type="project" value="UniProtKB"/>
</dbReference>
<dbReference type="GO" id="GO:0030425">
    <property type="term" value="C:dendrite"/>
    <property type="evidence" value="ECO:0007669"/>
    <property type="project" value="Ensembl"/>
</dbReference>
<dbReference type="GO" id="GO:0043025">
    <property type="term" value="C:neuronal cell body"/>
    <property type="evidence" value="ECO:0007669"/>
    <property type="project" value="Ensembl"/>
</dbReference>
<dbReference type="GO" id="GO:0005634">
    <property type="term" value="C:nucleus"/>
    <property type="evidence" value="ECO:0000314"/>
    <property type="project" value="UniProtKB"/>
</dbReference>
<dbReference type="GO" id="GO:0003682">
    <property type="term" value="F:chromatin binding"/>
    <property type="evidence" value="ECO:0000318"/>
    <property type="project" value="GO_Central"/>
</dbReference>
<dbReference type="GO" id="GO:0042393">
    <property type="term" value="F:histone binding"/>
    <property type="evidence" value="ECO:0000318"/>
    <property type="project" value="GO_Central"/>
</dbReference>
<dbReference type="GO" id="GO:0031491">
    <property type="term" value="F:nucleosome binding"/>
    <property type="evidence" value="ECO:0000314"/>
    <property type="project" value="UniProtKB"/>
</dbReference>
<dbReference type="GO" id="GO:0003723">
    <property type="term" value="F:RNA binding"/>
    <property type="evidence" value="ECO:0007005"/>
    <property type="project" value="UniProtKB"/>
</dbReference>
<dbReference type="GO" id="GO:0051082">
    <property type="term" value="F:unfolded protein binding"/>
    <property type="evidence" value="ECO:0000304"/>
    <property type="project" value="ProtInc"/>
</dbReference>
<dbReference type="GO" id="GO:0006334">
    <property type="term" value="P:nucleosome assembly"/>
    <property type="evidence" value="ECO:0000314"/>
    <property type="project" value="UniProtKB"/>
</dbReference>
<dbReference type="FunFam" id="1.20.5.1500:FF:000001">
    <property type="entry name" value="Nucleosome assembly protein 1-like 1"/>
    <property type="match status" value="1"/>
</dbReference>
<dbReference type="FunFam" id="3.30.1120.90:FF:000001">
    <property type="entry name" value="Nucleosome assembly protein 1-like 1"/>
    <property type="match status" value="1"/>
</dbReference>
<dbReference type="Gene3D" id="1.20.5.1500">
    <property type="match status" value="1"/>
</dbReference>
<dbReference type="Gene3D" id="3.30.1120.90">
    <property type="entry name" value="Nucleosome assembly protein"/>
    <property type="match status" value="1"/>
</dbReference>
<dbReference type="InterPro" id="IPR037231">
    <property type="entry name" value="NAP-like_sf"/>
</dbReference>
<dbReference type="InterPro" id="IPR002164">
    <property type="entry name" value="NAP_family"/>
</dbReference>
<dbReference type="PANTHER" id="PTHR11875">
    <property type="entry name" value="TESTIS-SPECIFIC Y-ENCODED PROTEIN"/>
    <property type="match status" value="1"/>
</dbReference>
<dbReference type="Pfam" id="PF00956">
    <property type="entry name" value="NAP"/>
    <property type="match status" value="1"/>
</dbReference>
<dbReference type="SUPFAM" id="SSF143113">
    <property type="entry name" value="NAP-like"/>
    <property type="match status" value="1"/>
</dbReference>
<protein>
    <recommendedName>
        <fullName>Nucleosome assembly protein 1-like 4</fullName>
    </recommendedName>
    <alternativeName>
        <fullName evidence="9">Nucleosome assembly protein 2</fullName>
        <shortName evidence="9">NAP-2</shortName>
    </alternativeName>
</protein>
<reference key="1">
    <citation type="journal article" date="1996" name="Hum. Mol. Genet.">
        <title>A novel human homologue of yeast nucleosome assembly protein, 65 kb centromeric to the p57KIP2 gene, is biallelically expressed in fetal and adult tissues.</title>
        <authorList>
            <person name="Hu R.-J."/>
            <person name="Lee M.P."/>
            <person name="Johnson L.A."/>
            <person name="Feinberg A.P."/>
        </authorList>
    </citation>
    <scope>NUCLEOTIDE SEQUENCE [MRNA] (ISOFORM 1)</scope>
    <scope>TISSUE SPECIFICITY</scope>
</reference>
<reference key="2">
    <citation type="submission" date="2009-05" db="EMBL/GenBank/DDBJ databases">
        <title>human nucleosome assembly protein 1-like 4b.</title>
        <authorList>
            <person name="Okuwaki M."/>
            <person name="Kato K."/>
            <person name="Nagata K."/>
        </authorList>
    </citation>
    <scope>NUCLEOTIDE SEQUENCE [MRNA] (ISOFORM 2)</scope>
</reference>
<reference key="3">
    <citation type="journal article" date="2004" name="Nat. Genet.">
        <title>Complete sequencing and characterization of 21,243 full-length human cDNAs.</title>
        <authorList>
            <person name="Ota T."/>
            <person name="Suzuki Y."/>
            <person name="Nishikawa T."/>
            <person name="Otsuki T."/>
            <person name="Sugiyama T."/>
            <person name="Irie R."/>
            <person name="Wakamatsu A."/>
            <person name="Hayashi K."/>
            <person name="Sato H."/>
            <person name="Nagai K."/>
            <person name="Kimura K."/>
            <person name="Makita H."/>
            <person name="Sekine M."/>
            <person name="Obayashi M."/>
            <person name="Nishi T."/>
            <person name="Shibahara T."/>
            <person name="Tanaka T."/>
            <person name="Ishii S."/>
            <person name="Yamamoto J."/>
            <person name="Saito K."/>
            <person name="Kawai Y."/>
            <person name="Isono Y."/>
            <person name="Nakamura Y."/>
            <person name="Nagahari K."/>
            <person name="Murakami K."/>
            <person name="Yasuda T."/>
            <person name="Iwayanagi T."/>
            <person name="Wagatsuma M."/>
            <person name="Shiratori A."/>
            <person name="Sudo H."/>
            <person name="Hosoiri T."/>
            <person name="Kaku Y."/>
            <person name="Kodaira H."/>
            <person name="Kondo H."/>
            <person name="Sugawara M."/>
            <person name="Takahashi M."/>
            <person name="Kanda K."/>
            <person name="Yokoi T."/>
            <person name="Furuya T."/>
            <person name="Kikkawa E."/>
            <person name="Omura Y."/>
            <person name="Abe K."/>
            <person name="Kamihara K."/>
            <person name="Katsuta N."/>
            <person name="Sato K."/>
            <person name="Tanikawa M."/>
            <person name="Yamazaki M."/>
            <person name="Ninomiya K."/>
            <person name="Ishibashi T."/>
            <person name="Yamashita H."/>
            <person name="Murakawa K."/>
            <person name="Fujimori K."/>
            <person name="Tanai H."/>
            <person name="Kimata M."/>
            <person name="Watanabe M."/>
            <person name="Hiraoka S."/>
            <person name="Chiba Y."/>
            <person name="Ishida S."/>
            <person name="Ono Y."/>
            <person name="Takiguchi S."/>
            <person name="Watanabe S."/>
            <person name="Yosida M."/>
            <person name="Hotuta T."/>
            <person name="Kusano J."/>
            <person name="Kanehori K."/>
            <person name="Takahashi-Fujii A."/>
            <person name="Hara H."/>
            <person name="Tanase T.-O."/>
            <person name="Nomura Y."/>
            <person name="Togiya S."/>
            <person name="Komai F."/>
            <person name="Hara R."/>
            <person name="Takeuchi K."/>
            <person name="Arita M."/>
            <person name="Imose N."/>
            <person name="Musashino K."/>
            <person name="Yuuki H."/>
            <person name="Oshima A."/>
            <person name="Sasaki N."/>
            <person name="Aotsuka S."/>
            <person name="Yoshikawa Y."/>
            <person name="Matsunawa H."/>
            <person name="Ichihara T."/>
            <person name="Shiohata N."/>
            <person name="Sano S."/>
            <person name="Moriya S."/>
            <person name="Momiyama H."/>
            <person name="Satoh N."/>
            <person name="Takami S."/>
            <person name="Terashima Y."/>
            <person name="Suzuki O."/>
            <person name="Nakagawa S."/>
            <person name="Senoh A."/>
            <person name="Mizoguchi H."/>
            <person name="Goto Y."/>
            <person name="Shimizu F."/>
            <person name="Wakebe H."/>
            <person name="Hishigaki H."/>
            <person name="Watanabe T."/>
            <person name="Sugiyama A."/>
            <person name="Takemoto M."/>
            <person name="Kawakami B."/>
            <person name="Yamazaki M."/>
            <person name="Watanabe K."/>
            <person name="Kumagai A."/>
            <person name="Itakura S."/>
            <person name="Fukuzumi Y."/>
            <person name="Fujimori Y."/>
            <person name="Komiyama M."/>
            <person name="Tashiro H."/>
            <person name="Tanigami A."/>
            <person name="Fujiwara T."/>
            <person name="Ono T."/>
            <person name="Yamada K."/>
            <person name="Fujii Y."/>
            <person name="Ozaki K."/>
            <person name="Hirao M."/>
            <person name="Ohmori Y."/>
            <person name="Kawabata A."/>
            <person name="Hikiji T."/>
            <person name="Kobatake N."/>
            <person name="Inagaki H."/>
            <person name="Ikema Y."/>
            <person name="Okamoto S."/>
            <person name="Okitani R."/>
            <person name="Kawakami T."/>
            <person name="Noguchi S."/>
            <person name="Itoh T."/>
            <person name="Shigeta K."/>
            <person name="Senba T."/>
            <person name="Matsumura K."/>
            <person name="Nakajima Y."/>
            <person name="Mizuno T."/>
            <person name="Morinaga M."/>
            <person name="Sasaki M."/>
            <person name="Togashi T."/>
            <person name="Oyama M."/>
            <person name="Hata H."/>
            <person name="Watanabe M."/>
            <person name="Komatsu T."/>
            <person name="Mizushima-Sugano J."/>
            <person name="Satoh T."/>
            <person name="Shirai Y."/>
            <person name="Takahashi Y."/>
            <person name="Nakagawa K."/>
            <person name="Okumura K."/>
            <person name="Nagase T."/>
            <person name="Nomura N."/>
            <person name="Kikuchi H."/>
            <person name="Masuho Y."/>
            <person name="Yamashita R."/>
            <person name="Nakai K."/>
            <person name="Yada T."/>
            <person name="Nakamura Y."/>
            <person name="Ohara O."/>
            <person name="Isogai T."/>
            <person name="Sugano S."/>
        </authorList>
    </citation>
    <scope>NUCLEOTIDE SEQUENCE [LARGE SCALE MRNA] (ISOFORM 1)</scope>
    <source>
        <tissue>Brain</tissue>
    </source>
</reference>
<reference key="4">
    <citation type="journal article" date="2006" name="Nature">
        <title>Human chromosome 11 DNA sequence and analysis including novel gene identification.</title>
        <authorList>
            <person name="Taylor T.D."/>
            <person name="Noguchi H."/>
            <person name="Totoki Y."/>
            <person name="Toyoda A."/>
            <person name="Kuroki Y."/>
            <person name="Dewar K."/>
            <person name="Lloyd C."/>
            <person name="Itoh T."/>
            <person name="Takeda T."/>
            <person name="Kim D.-W."/>
            <person name="She X."/>
            <person name="Barlow K.F."/>
            <person name="Bloom T."/>
            <person name="Bruford E."/>
            <person name="Chang J.L."/>
            <person name="Cuomo C.A."/>
            <person name="Eichler E."/>
            <person name="FitzGerald M.G."/>
            <person name="Jaffe D.B."/>
            <person name="LaButti K."/>
            <person name="Nicol R."/>
            <person name="Park H.-S."/>
            <person name="Seaman C."/>
            <person name="Sougnez C."/>
            <person name="Yang X."/>
            <person name="Zimmer A.R."/>
            <person name="Zody M.C."/>
            <person name="Birren B.W."/>
            <person name="Nusbaum C."/>
            <person name="Fujiyama A."/>
            <person name="Hattori M."/>
            <person name="Rogers J."/>
            <person name="Lander E.S."/>
            <person name="Sakaki Y."/>
        </authorList>
    </citation>
    <scope>NUCLEOTIDE SEQUENCE [LARGE SCALE GENOMIC DNA]</scope>
</reference>
<reference key="5">
    <citation type="journal article" date="2004" name="Genome Res.">
        <title>The status, quality, and expansion of the NIH full-length cDNA project: the Mammalian Gene Collection (MGC).</title>
        <authorList>
            <consortium name="The MGC Project Team"/>
        </authorList>
    </citation>
    <scope>NUCLEOTIDE SEQUENCE [LARGE SCALE MRNA] (ISOFORM 1)</scope>
    <source>
        <tissue>Muscle</tissue>
    </source>
</reference>
<reference key="6">
    <citation type="journal article" date="1997" name="Genomics">
        <title>Functional characterization of human nucleosome assembly protein-2 (NAP1L4) suggests a role as a histone chaperone.</title>
        <authorList>
            <person name="Rodriguez P."/>
            <person name="Munroe D."/>
            <person name="Prawitt D."/>
            <person name="Chu L.L."/>
            <person name="Bric E."/>
            <person name="Kim J."/>
            <person name="Reid L.H."/>
            <person name="Davies C."/>
            <person name="Nakagama H."/>
            <person name="Loebbert R."/>
            <person name="Winterpacht A."/>
            <person name="Petruzzi M.J."/>
            <person name="Higgins M.J."/>
            <person name="Nowak N."/>
            <person name="Evans G."/>
            <person name="Shows T."/>
            <person name="Weissman B.E."/>
            <person name="Zabel B."/>
            <person name="Housman D.E."/>
            <person name="Pelletier J."/>
        </authorList>
    </citation>
    <scope>FUNCTION</scope>
    <scope>SUBCELLULAR LOCATION</scope>
    <scope>SUBUNIT</scope>
</reference>
<reference key="7">
    <citation type="journal article" date="2000" name="J. Mol. Biol.">
        <title>NAP-2: histone chaperone function and phosphorylation state through the cell cycle.</title>
        <authorList>
            <person name="Rodriguez P."/>
            <person name="Pelletier J."/>
            <person name="Price G.B."/>
            <person name="Zannis-Hadjopoulos M."/>
        </authorList>
    </citation>
    <scope>SUBCELLULAR LOCATION</scope>
    <scope>PHOSPHORYLATION</scope>
</reference>
<reference key="8">
    <citation type="journal article" date="2006" name="Cell">
        <title>Global, in vivo, and site-specific phosphorylation dynamics in signaling networks.</title>
        <authorList>
            <person name="Olsen J.V."/>
            <person name="Blagoev B."/>
            <person name="Gnad F."/>
            <person name="Macek B."/>
            <person name="Kumar C."/>
            <person name="Mortensen P."/>
            <person name="Mann M."/>
        </authorList>
    </citation>
    <scope>PHOSPHORYLATION [LARGE SCALE ANALYSIS] AT SER-125</scope>
    <scope>IDENTIFICATION BY MASS SPECTROMETRY [LARGE SCALE ANALYSIS]</scope>
    <source>
        <tissue>Cervix carcinoma</tissue>
    </source>
</reference>
<reference key="9">
    <citation type="journal article" date="2007" name="J. Proteome Res.">
        <title>Improved titanium dioxide enrichment of phosphopeptides from HeLa cells and high confident phosphopeptide identification by cross-validation of MS/MS and MS/MS/MS spectra.</title>
        <authorList>
            <person name="Yu L.R."/>
            <person name="Zhu Z."/>
            <person name="Chan K.C."/>
            <person name="Issaq H.J."/>
            <person name="Dimitrov D.S."/>
            <person name="Veenstra T.D."/>
        </authorList>
    </citation>
    <scope>IDENTIFICATION BY MASS SPECTROMETRY [LARGE SCALE ANALYSIS]</scope>
    <source>
        <tissue>Cervix carcinoma</tissue>
    </source>
</reference>
<reference key="10">
    <citation type="journal article" date="2008" name="Proc. Natl. Acad. Sci. U.S.A.">
        <title>A quantitative atlas of mitotic phosphorylation.</title>
        <authorList>
            <person name="Dephoure N."/>
            <person name="Zhou C."/>
            <person name="Villen J."/>
            <person name="Beausoleil S.A."/>
            <person name="Bakalarski C.E."/>
            <person name="Elledge S.J."/>
            <person name="Gygi S.P."/>
        </authorList>
    </citation>
    <scope>PHOSPHORYLATION [LARGE SCALE ANALYSIS] AT THR-51 AND SER-125</scope>
    <scope>IDENTIFICATION BY MASS SPECTROMETRY [LARGE SCALE ANALYSIS]</scope>
    <source>
        <tissue>Cervix carcinoma</tissue>
    </source>
</reference>
<reference key="11">
    <citation type="journal article" date="2008" name="Proteomics">
        <title>Large-scale phosphoproteome analysis of human liver tissue by enrichment and fractionation of phosphopeptides with strong anion exchange chromatography.</title>
        <authorList>
            <person name="Han G."/>
            <person name="Ye M."/>
            <person name="Zhou H."/>
            <person name="Jiang X."/>
            <person name="Feng S."/>
            <person name="Jiang X."/>
            <person name="Tian R."/>
            <person name="Wan D."/>
            <person name="Zou H."/>
            <person name="Gu J."/>
        </authorList>
    </citation>
    <scope>PHOSPHORYLATION [LARGE SCALE ANALYSIS] AT SER-125</scope>
    <scope>IDENTIFICATION BY MASS SPECTROMETRY [LARGE SCALE ANALYSIS]</scope>
    <source>
        <tissue>Liver</tissue>
    </source>
</reference>
<reference key="12">
    <citation type="journal article" date="2009" name="Anal. Chem.">
        <title>Lys-N and trypsin cover complementary parts of the phosphoproteome in a refined SCX-based approach.</title>
        <authorList>
            <person name="Gauci S."/>
            <person name="Helbig A.O."/>
            <person name="Slijper M."/>
            <person name="Krijgsveld J."/>
            <person name="Heck A.J."/>
            <person name="Mohammed S."/>
        </authorList>
    </citation>
    <scope>ACETYLATION [LARGE SCALE ANALYSIS] AT ALA-2</scope>
    <scope>CLEAVAGE OF INITIATOR METHIONINE [LARGE SCALE ANALYSIS]</scope>
    <scope>IDENTIFICATION BY MASS SPECTROMETRY [LARGE SCALE ANALYSIS]</scope>
</reference>
<reference key="13">
    <citation type="journal article" date="2009" name="Sci. Signal.">
        <title>Quantitative phosphoproteomic analysis of T cell receptor signaling reveals system-wide modulation of protein-protein interactions.</title>
        <authorList>
            <person name="Mayya V."/>
            <person name="Lundgren D.H."/>
            <person name="Hwang S.-I."/>
            <person name="Rezaul K."/>
            <person name="Wu L."/>
            <person name="Eng J.K."/>
            <person name="Rodionov V."/>
            <person name="Han D.K."/>
        </authorList>
    </citation>
    <scope>PHOSPHORYLATION [LARGE SCALE ANALYSIS] AT SER-125 AND SER-304</scope>
    <scope>IDENTIFICATION BY MASS SPECTROMETRY [LARGE SCALE ANALYSIS]</scope>
    <source>
        <tissue>Leukemic T-cell</tissue>
    </source>
</reference>
<reference key="14">
    <citation type="journal article" date="2010" name="Sci. Signal.">
        <title>Quantitative phosphoproteomics reveals widespread full phosphorylation site occupancy during mitosis.</title>
        <authorList>
            <person name="Olsen J.V."/>
            <person name="Vermeulen M."/>
            <person name="Santamaria A."/>
            <person name="Kumar C."/>
            <person name="Miller M.L."/>
            <person name="Jensen L.J."/>
            <person name="Gnad F."/>
            <person name="Cox J."/>
            <person name="Jensen T.S."/>
            <person name="Nigg E.A."/>
            <person name="Brunak S."/>
            <person name="Mann M."/>
        </authorList>
    </citation>
    <scope>ACETYLATION [LARGE SCALE ANALYSIS] AT ALA-2</scope>
    <scope>PHOSPHORYLATION [LARGE SCALE ANALYSIS] AT SER-5; SER-7; SER-12; THR-51; SER-54 AND SER-125</scope>
    <scope>CLEAVAGE OF INITIATOR METHIONINE [LARGE SCALE ANALYSIS]</scope>
    <scope>IDENTIFICATION BY MASS SPECTROMETRY [LARGE SCALE ANALYSIS]</scope>
    <source>
        <tissue>Cervix carcinoma</tissue>
    </source>
</reference>
<reference key="15">
    <citation type="journal article" date="2011" name="BMC Syst. Biol.">
        <title>Initial characterization of the human central proteome.</title>
        <authorList>
            <person name="Burkard T.R."/>
            <person name="Planyavsky M."/>
            <person name="Kaupe I."/>
            <person name="Breitwieser F.P."/>
            <person name="Buerckstuemmer T."/>
            <person name="Bennett K.L."/>
            <person name="Superti-Furga G."/>
            <person name="Colinge J."/>
        </authorList>
    </citation>
    <scope>IDENTIFICATION BY MASS SPECTROMETRY [LARGE SCALE ANALYSIS]</scope>
</reference>
<reference key="16">
    <citation type="journal article" date="2011" name="Sci. Signal.">
        <title>System-wide temporal characterization of the proteome and phosphoproteome of human embryonic stem cell differentiation.</title>
        <authorList>
            <person name="Rigbolt K.T."/>
            <person name="Prokhorova T.A."/>
            <person name="Akimov V."/>
            <person name="Henningsen J."/>
            <person name="Johansen P.T."/>
            <person name="Kratchmarova I."/>
            <person name="Kassem M."/>
            <person name="Mann M."/>
            <person name="Olsen J.V."/>
            <person name="Blagoev B."/>
        </authorList>
    </citation>
    <scope>ACETYLATION [LARGE SCALE ANALYSIS] AT ALA-2</scope>
    <scope>PHOSPHORYLATION [LARGE SCALE ANALYSIS] AT SER-5; SER-7; SER-12 AND SER-125</scope>
    <scope>CLEAVAGE OF INITIATOR METHIONINE [LARGE SCALE ANALYSIS]</scope>
    <scope>IDENTIFICATION BY MASS SPECTROMETRY [LARGE SCALE ANALYSIS]</scope>
</reference>
<reference key="17">
    <citation type="journal article" date="2012" name="Mol. Cell. Proteomics">
        <title>Comparative large-scale characterisation of plant vs. mammal proteins reveals similar and idiosyncratic N-alpha acetylation features.</title>
        <authorList>
            <person name="Bienvenut W.V."/>
            <person name="Sumpton D."/>
            <person name="Martinez A."/>
            <person name="Lilla S."/>
            <person name="Espagne C."/>
            <person name="Meinnel T."/>
            <person name="Giglione C."/>
        </authorList>
    </citation>
    <scope>ACETYLATION [LARGE SCALE ANALYSIS] AT ALA-2</scope>
    <scope>CLEAVAGE OF INITIATOR METHIONINE [LARGE SCALE ANALYSIS]</scope>
    <scope>IDENTIFICATION BY MASS SPECTROMETRY [LARGE SCALE ANALYSIS]</scope>
</reference>
<reference key="18">
    <citation type="journal article" date="2013" name="J. Proteome Res.">
        <title>Toward a comprehensive characterization of a human cancer cell phosphoproteome.</title>
        <authorList>
            <person name="Zhou H."/>
            <person name="Di Palma S."/>
            <person name="Preisinger C."/>
            <person name="Peng M."/>
            <person name="Polat A.N."/>
            <person name="Heck A.J."/>
            <person name="Mohammed S."/>
        </authorList>
    </citation>
    <scope>PHOSPHORYLATION [LARGE SCALE ANALYSIS] AT SER-5; SER-7; SER-12; THR-51; THR-58 AND SER-125</scope>
    <scope>IDENTIFICATION BY MASS SPECTROMETRY [LARGE SCALE ANALYSIS]</scope>
    <source>
        <tissue>Cervix carcinoma</tissue>
        <tissue>Erythroleukemia</tissue>
    </source>
</reference>
<reference key="19">
    <citation type="journal article" date="2014" name="J. Proteomics">
        <title>An enzyme assisted RP-RPLC approach for in-depth analysis of human liver phosphoproteome.</title>
        <authorList>
            <person name="Bian Y."/>
            <person name="Song C."/>
            <person name="Cheng K."/>
            <person name="Dong M."/>
            <person name="Wang F."/>
            <person name="Huang J."/>
            <person name="Sun D."/>
            <person name="Wang L."/>
            <person name="Ye M."/>
            <person name="Zou H."/>
        </authorList>
    </citation>
    <scope>IDENTIFICATION BY MASS SPECTROMETRY [LARGE SCALE ANALYSIS]</scope>
    <source>
        <tissue>Liver</tissue>
    </source>
</reference>
<reference key="20">
    <citation type="journal article" date="2018" name="J. Virol.">
        <title>Multiple Host Factors Interact with the Hypervariable Domain of Chikungunya Virus nsP3 and Determine Viral Replication in Cell-Specific Mode.</title>
        <authorList>
            <person name="Meshram C.D."/>
            <person name="Agback P."/>
            <person name="Shiliaev N."/>
            <person name="Urakova N."/>
            <person name="Mobley J.A."/>
            <person name="Agback T."/>
            <person name="Frolova E.I."/>
            <person name="Frolov I."/>
        </authorList>
    </citation>
    <scope>INTERACTION WITH CHIKUNGUNYA VIRUS NON-STRUCTURAL PROTEIN 3 (MICROBIAL INFECTION)</scope>
</reference>
<name>NP1L4_HUMAN</name>
<evidence type="ECO:0000250" key="1">
    <source>
        <dbReference type="UniProtKB" id="P28656"/>
    </source>
</evidence>
<evidence type="ECO:0000250" key="2">
    <source>
        <dbReference type="UniProtKB" id="Q78ZA7"/>
    </source>
</evidence>
<evidence type="ECO:0000255" key="3"/>
<evidence type="ECO:0000256" key="4">
    <source>
        <dbReference type="SAM" id="MobiDB-lite"/>
    </source>
</evidence>
<evidence type="ECO:0000269" key="5">
    <source>
    </source>
</evidence>
<evidence type="ECO:0000269" key="6">
    <source>
    </source>
</evidence>
<evidence type="ECO:0000269" key="7">
    <source>
    </source>
</evidence>
<evidence type="ECO:0000269" key="8">
    <source>
    </source>
</evidence>
<evidence type="ECO:0000303" key="9">
    <source>
    </source>
</evidence>
<evidence type="ECO:0000303" key="10">
    <source ref="2"/>
</evidence>
<evidence type="ECO:0000305" key="11"/>
<evidence type="ECO:0000312" key="12">
    <source>
        <dbReference type="HGNC" id="HGNC:7640"/>
    </source>
</evidence>
<evidence type="ECO:0007744" key="13">
    <source>
    </source>
</evidence>
<evidence type="ECO:0007744" key="14">
    <source>
    </source>
</evidence>
<evidence type="ECO:0007744" key="15">
    <source>
    </source>
</evidence>
<evidence type="ECO:0007744" key="16">
    <source>
    </source>
</evidence>
<evidence type="ECO:0007744" key="17">
    <source>
    </source>
</evidence>
<evidence type="ECO:0007744" key="18">
    <source>
    </source>
</evidence>
<evidence type="ECO:0007744" key="19">
    <source>
    </source>
</evidence>
<evidence type="ECO:0007744" key="20">
    <source>
    </source>
</evidence>
<evidence type="ECO:0007744" key="21">
    <source>
    </source>
</evidence>
<feature type="initiator methionine" description="Removed" evidence="16 18 19 20">
    <location>
        <position position="1"/>
    </location>
</feature>
<feature type="chain" id="PRO_0000185658" description="Nucleosome assembly protein 1-like 4">
    <location>
        <begin position="2"/>
        <end position="375"/>
    </location>
</feature>
<feature type="region of interest" description="Disordered" evidence="4">
    <location>
        <begin position="1"/>
        <end position="31"/>
    </location>
</feature>
<feature type="region of interest" description="Disordered" evidence="4">
    <location>
        <begin position="116"/>
        <end position="137"/>
    </location>
</feature>
<feature type="region of interest" description="Disordered" evidence="4">
    <location>
        <begin position="339"/>
        <end position="375"/>
    </location>
</feature>
<feature type="short sequence motif" description="Nuclear localization signal" evidence="3">
    <location>
        <begin position="265"/>
        <end position="271"/>
    </location>
</feature>
<feature type="compositionally biased region" description="Polar residues" evidence="4">
    <location>
        <begin position="20"/>
        <end position="31"/>
    </location>
</feature>
<feature type="compositionally biased region" description="Basic and acidic residues" evidence="4">
    <location>
        <begin position="121"/>
        <end position="137"/>
    </location>
</feature>
<feature type="modified residue" description="N-acetylalanine" evidence="16 18 19 20">
    <location>
        <position position="2"/>
    </location>
</feature>
<feature type="modified residue" description="Phosphoserine" evidence="18 19 21">
    <location>
        <position position="5"/>
    </location>
</feature>
<feature type="modified residue" description="Phosphoserine" evidence="18 19 21">
    <location>
        <position position="7"/>
    </location>
</feature>
<feature type="modified residue" description="Phosphoserine" evidence="18 19 21">
    <location>
        <position position="12"/>
    </location>
</feature>
<feature type="modified residue" description="Phosphothreonine" evidence="15 18 21">
    <location>
        <position position="51"/>
    </location>
</feature>
<feature type="modified residue" description="Phosphoserine" evidence="2">
    <location>
        <position position="53"/>
    </location>
</feature>
<feature type="modified residue" description="Phosphoserine" evidence="18">
    <location>
        <position position="54"/>
    </location>
</feature>
<feature type="modified residue" description="Phosphothreonine" evidence="21">
    <location>
        <position position="58"/>
    </location>
</feature>
<feature type="modified residue" description="N6-acetyllysine" evidence="1">
    <location>
        <position position="105"/>
    </location>
</feature>
<feature type="modified residue" description="Phosphoserine" evidence="13 14 15 17 18 19 21">
    <location>
        <position position="125"/>
    </location>
</feature>
<feature type="modified residue" description="N6-acetyllysine" evidence="2">
    <location>
        <position position="146"/>
    </location>
</feature>
<feature type="modified residue" description="Phosphoserine" evidence="17">
    <location>
        <position position="304"/>
    </location>
</feature>
<feature type="splice variant" id="VSP_053910" description="In isoform 2." evidence="10">
    <original>V</original>
    <variation>KEPSQPAECKQQ</variation>
    <location>
        <position position="375"/>
    </location>
</feature>
<feature type="sequence conflict" description="In Ref. 3; BAG35491." evidence="11" ref="3">
    <original>R</original>
    <variation>K</variation>
    <location>
        <position position="107"/>
    </location>
</feature>
<organism>
    <name type="scientific">Homo sapiens</name>
    <name type="common">Human</name>
    <dbReference type="NCBI Taxonomy" id="9606"/>
    <lineage>
        <taxon>Eukaryota</taxon>
        <taxon>Metazoa</taxon>
        <taxon>Chordata</taxon>
        <taxon>Craniata</taxon>
        <taxon>Vertebrata</taxon>
        <taxon>Euteleostomi</taxon>
        <taxon>Mammalia</taxon>
        <taxon>Eutheria</taxon>
        <taxon>Euarchontoglires</taxon>
        <taxon>Primates</taxon>
        <taxon>Haplorrhini</taxon>
        <taxon>Catarrhini</taxon>
        <taxon>Hominidae</taxon>
        <taxon>Homo</taxon>
    </lineage>
</organism>